<name>PARC_SHIFL</name>
<organism>
    <name type="scientific">Shigella flexneri</name>
    <dbReference type="NCBI Taxonomy" id="623"/>
    <lineage>
        <taxon>Bacteria</taxon>
        <taxon>Pseudomonadati</taxon>
        <taxon>Pseudomonadota</taxon>
        <taxon>Gammaproteobacteria</taxon>
        <taxon>Enterobacterales</taxon>
        <taxon>Enterobacteriaceae</taxon>
        <taxon>Shigella</taxon>
    </lineage>
</organism>
<evidence type="ECO:0000255" key="1">
    <source>
        <dbReference type="HAMAP-Rule" id="MF_00936"/>
    </source>
</evidence>
<evidence type="ECO:0000255" key="2">
    <source>
        <dbReference type="PROSITE-ProRule" id="PRU01384"/>
    </source>
</evidence>
<evidence type="ECO:0000256" key="3">
    <source>
        <dbReference type="SAM" id="MobiDB-lite"/>
    </source>
</evidence>
<evidence type="ECO:0000305" key="4"/>
<reference key="1">
    <citation type="journal article" date="2002" name="Nucleic Acids Res.">
        <title>Genome sequence of Shigella flexneri 2a: insights into pathogenicity through comparison with genomes of Escherichia coli K12 and O157.</title>
        <authorList>
            <person name="Jin Q."/>
            <person name="Yuan Z."/>
            <person name="Xu J."/>
            <person name="Wang Y."/>
            <person name="Shen Y."/>
            <person name="Lu W."/>
            <person name="Wang J."/>
            <person name="Liu H."/>
            <person name="Yang J."/>
            <person name="Yang F."/>
            <person name="Zhang X."/>
            <person name="Zhang J."/>
            <person name="Yang G."/>
            <person name="Wu H."/>
            <person name="Qu D."/>
            <person name="Dong J."/>
            <person name="Sun L."/>
            <person name="Xue Y."/>
            <person name="Zhao A."/>
            <person name="Gao Y."/>
            <person name="Zhu J."/>
            <person name="Kan B."/>
            <person name="Ding K."/>
            <person name="Chen S."/>
            <person name="Cheng H."/>
            <person name="Yao Z."/>
            <person name="He B."/>
            <person name="Chen R."/>
            <person name="Ma D."/>
            <person name="Qiang B."/>
            <person name="Wen Y."/>
            <person name="Hou Y."/>
            <person name="Yu J."/>
        </authorList>
    </citation>
    <scope>NUCLEOTIDE SEQUENCE [LARGE SCALE GENOMIC DNA]</scope>
    <source>
        <strain>301 / Serotype 2a</strain>
    </source>
</reference>
<reference key="2">
    <citation type="journal article" date="2003" name="Infect. Immun.">
        <title>Complete genome sequence and comparative genomics of Shigella flexneri serotype 2a strain 2457T.</title>
        <authorList>
            <person name="Wei J."/>
            <person name="Goldberg M.B."/>
            <person name="Burland V."/>
            <person name="Venkatesan M.M."/>
            <person name="Deng W."/>
            <person name="Fournier G."/>
            <person name="Mayhew G.F."/>
            <person name="Plunkett G. III"/>
            <person name="Rose D.J."/>
            <person name="Darling A."/>
            <person name="Mau B."/>
            <person name="Perna N.T."/>
            <person name="Payne S.M."/>
            <person name="Runyen-Janecky L.J."/>
            <person name="Zhou S."/>
            <person name="Schwartz D.C."/>
            <person name="Blattner F.R."/>
        </authorList>
    </citation>
    <scope>NUCLEOTIDE SEQUENCE [LARGE SCALE GENOMIC DNA]</scope>
    <source>
        <strain>ATCC 700930 / 2457T / Serotype 2a</strain>
    </source>
</reference>
<reference key="3">
    <citation type="journal article" date="1998" name="Antimicrob. Agents Chemother.">
        <title>Novel combination of mutations in the DNA gyrase and topoisomerase IV genes in laboratory-grown fluoroquinolone-resistant Shigella flexneri mutants.</title>
        <authorList>
            <person name="Chu Y.W."/>
            <person name="Houang E.T.S."/>
            <person name="Cheng A.F.B."/>
        </authorList>
    </citation>
    <scope>NUCLEOTIDE SEQUENCE [GENOMIC DNA] OF 59-137</scope>
</reference>
<accession>P0AFI4</accession>
<accession>O69154</accession>
<accession>P20082</accession>
<proteinExistence type="inferred from homology"/>
<feature type="chain" id="PRO_0000145408" description="DNA topoisomerase 4 subunit A">
    <location>
        <begin position="1"/>
        <end position="752"/>
    </location>
</feature>
<feature type="domain" description="Topo IIA-type catalytic" evidence="2">
    <location>
        <begin position="31"/>
        <end position="494"/>
    </location>
</feature>
<feature type="region of interest" description="Disordered" evidence="3">
    <location>
        <begin position="472"/>
        <end position="492"/>
    </location>
</feature>
<feature type="region of interest" description="Disordered" evidence="3">
    <location>
        <begin position="718"/>
        <end position="752"/>
    </location>
</feature>
<feature type="compositionally biased region" description="Basic and acidic residues" evidence="3">
    <location>
        <begin position="473"/>
        <end position="492"/>
    </location>
</feature>
<feature type="compositionally biased region" description="Basic and acidic residues" evidence="3">
    <location>
        <begin position="732"/>
        <end position="743"/>
    </location>
</feature>
<feature type="active site" description="O-(5'-phospho-DNA)-tyrosine intermediate" evidence="1">
    <location>
        <position position="120"/>
    </location>
</feature>
<feature type="site" description="Interaction with DNA" evidence="1">
    <location>
        <position position="39"/>
    </location>
</feature>
<feature type="site" description="Interaction with DNA" evidence="1">
    <location>
        <position position="75"/>
    </location>
</feature>
<feature type="site" description="Interaction with DNA" evidence="1">
    <location>
        <position position="77"/>
    </location>
</feature>
<feature type="site" description="Transition state stabilizer" evidence="1">
    <location>
        <position position="119"/>
    </location>
</feature>
<feature type="sequence conflict" description="In Ref. 3; AAC17115." evidence="4" ref="3">
    <original>A</original>
    <variation>P</variation>
    <location>
        <position position="85"/>
    </location>
</feature>
<dbReference type="EC" id="5.6.2.2" evidence="1"/>
<dbReference type="EMBL" id="AE005674">
    <property type="protein sequence ID" value="AAN44541.1"/>
    <property type="molecule type" value="Genomic_DNA"/>
</dbReference>
<dbReference type="EMBL" id="AE014073">
    <property type="protein sequence ID" value="AAP18353.1"/>
    <property type="molecule type" value="Genomic_DNA"/>
</dbReference>
<dbReference type="EMBL" id="AF065132">
    <property type="protein sequence ID" value="AAC17115.1"/>
    <property type="molecule type" value="Genomic_DNA"/>
</dbReference>
<dbReference type="RefSeq" id="NP_708834.1">
    <property type="nucleotide sequence ID" value="NC_004337.2"/>
</dbReference>
<dbReference type="RefSeq" id="WP_001281881.1">
    <property type="nucleotide sequence ID" value="NZ_WACK01000001.1"/>
</dbReference>
<dbReference type="SMR" id="P0AFI4"/>
<dbReference type="STRING" id="198214.SF3063"/>
<dbReference type="PaxDb" id="198214-SF3063"/>
<dbReference type="GeneID" id="1026670"/>
<dbReference type="GeneID" id="75203584"/>
<dbReference type="KEGG" id="sfl:SF3063"/>
<dbReference type="KEGG" id="sfx:S3267"/>
<dbReference type="PATRIC" id="fig|198214.7.peg.3638"/>
<dbReference type="HOGENOM" id="CLU_002977_6_1_6"/>
<dbReference type="Proteomes" id="UP000001006">
    <property type="component" value="Chromosome"/>
</dbReference>
<dbReference type="Proteomes" id="UP000002673">
    <property type="component" value="Chromosome"/>
</dbReference>
<dbReference type="GO" id="GO:0005694">
    <property type="term" value="C:chromosome"/>
    <property type="evidence" value="ECO:0007669"/>
    <property type="project" value="InterPro"/>
</dbReference>
<dbReference type="GO" id="GO:0005737">
    <property type="term" value="C:cytoplasm"/>
    <property type="evidence" value="ECO:0007669"/>
    <property type="project" value="TreeGrafter"/>
</dbReference>
<dbReference type="GO" id="GO:0009330">
    <property type="term" value="C:DNA topoisomerase type II (double strand cut, ATP-hydrolyzing) complex"/>
    <property type="evidence" value="ECO:0007669"/>
    <property type="project" value="TreeGrafter"/>
</dbReference>
<dbReference type="GO" id="GO:0019897">
    <property type="term" value="C:extrinsic component of plasma membrane"/>
    <property type="evidence" value="ECO:0007669"/>
    <property type="project" value="UniProtKB-UniRule"/>
</dbReference>
<dbReference type="GO" id="GO:0005524">
    <property type="term" value="F:ATP binding"/>
    <property type="evidence" value="ECO:0007669"/>
    <property type="project" value="InterPro"/>
</dbReference>
<dbReference type="GO" id="GO:0003677">
    <property type="term" value="F:DNA binding"/>
    <property type="evidence" value="ECO:0007669"/>
    <property type="project" value="UniProtKB-UniRule"/>
</dbReference>
<dbReference type="GO" id="GO:0003918">
    <property type="term" value="F:DNA topoisomerase type II (double strand cut, ATP-hydrolyzing) activity"/>
    <property type="evidence" value="ECO:0007669"/>
    <property type="project" value="UniProtKB-UniRule"/>
</dbReference>
<dbReference type="GO" id="GO:0007059">
    <property type="term" value="P:chromosome segregation"/>
    <property type="evidence" value="ECO:0007669"/>
    <property type="project" value="UniProtKB-UniRule"/>
</dbReference>
<dbReference type="GO" id="GO:0006265">
    <property type="term" value="P:DNA topological change"/>
    <property type="evidence" value="ECO:0007669"/>
    <property type="project" value="UniProtKB-UniRule"/>
</dbReference>
<dbReference type="CDD" id="cd00187">
    <property type="entry name" value="TOP4c"/>
    <property type="match status" value="1"/>
</dbReference>
<dbReference type="FunFam" id="1.10.268.10:FF:000001">
    <property type="entry name" value="DNA gyrase subunit A"/>
    <property type="match status" value="1"/>
</dbReference>
<dbReference type="FunFam" id="2.120.10.90:FF:000003">
    <property type="entry name" value="DNA topoisomerase 4 subunit A"/>
    <property type="match status" value="1"/>
</dbReference>
<dbReference type="FunFam" id="3.30.1360.40:FF:000005">
    <property type="entry name" value="DNA topoisomerase 4 subunit A"/>
    <property type="match status" value="1"/>
</dbReference>
<dbReference type="Gene3D" id="3.30.1360.40">
    <property type="match status" value="1"/>
</dbReference>
<dbReference type="Gene3D" id="2.120.10.90">
    <property type="entry name" value="DNA gyrase/topoisomerase IV, subunit A, C-terminal"/>
    <property type="match status" value="1"/>
</dbReference>
<dbReference type="Gene3D" id="3.90.199.10">
    <property type="entry name" value="Topoisomerase II, domain 5"/>
    <property type="match status" value="1"/>
</dbReference>
<dbReference type="Gene3D" id="1.10.268.10">
    <property type="entry name" value="Topoisomerase, domain 3"/>
    <property type="match status" value="1"/>
</dbReference>
<dbReference type="HAMAP" id="MF_00936">
    <property type="entry name" value="ParC_type1"/>
    <property type="match status" value="1"/>
</dbReference>
<dbReference type="InterPro" id="IPR006691">
    <property type="entry name" value="GyrA/parC_rep"/>
</dbReference>
<dbReference type="InterPro" id="IPR035516">
    <property type="entry name" value="Gyrase/topoIV_suA_C"/>
</dbReference>
<dbReference type="InterPro" id="IPR013760">
    <property type="entry name" value="Topo_IIA-like_dom_sf"/>
</dbReference>
<dbReference type="InterPro" id="IPR013758">
    <property type="entry name" value="Topo_IIA_A/C_ab"/>
</dbReference>
<dbReference type="InterPro" id="IPR013757">
    <property type="entry name" value="Topo_IIA_A_a_sf"/>
</dbReference>
<dbReference type="InterPro" id="IPR002205">
    <property type="entry name" value="Topo_IIA_dom_A"/>
</dbReference>
<dbReference type="InterPro" id="IPR005742">
    <property type="entry name" value="TopoIV_A_Gneg"/>
</dbReference>
<dbReference type="InterPro" id="IPR050220">
    <property type="entry name" value="Type_II_DNA_Topoisomerases"/>
</dbReference>
<dbReference type="NCBIfam" id="TIGR01062">
    <property type="entry name" value="parC_Gneg"/>
    <property type="match status" value="1"/>
</dbReference>
<dbReference type="NCBIfam" id="NF004044">
    <property type="entry name" value="PRK05561.1"/>
    <property type="match status" value="1"/>
</dbReference>
<dbReference type="PANTHER" id="PTHR43493">
    <property type="entry name" value="DNA GYRASE/TOPOISOMERASE SUBUNIT A"/>
    <property type="match status" value="1"/>
</dbReference>
<dbReference type="PANTHER" id="PTHR43493:SF1">
    <property type="entry name" value="DNA TOPOISOMERASE 4 SUBUNIT A"/>
    <property type="match status" value="1"/>
</dbReference>
<dbReference type="Pfam" id="PF03989">
    <property type="entry name" value="DNA_gyraseA_C"/>
    <property type="match status" value="2"/>
</dbReference>
<dbReference type="Pfam" id="PF00521">
    <property type="entry name" value="DNA_topoisoIV"/>
    <property type="match status" value="1"/>
</dbReference>
<dbReference type="SMART" id="SM00434">
    <property type="entry name" value="TOP4c"/>
    <property type="match status" value="1"/>
</dbReference>
<dbReference type="SUPFAM" id="SSF101904">
    <property type="entry name" value="GyrA/ParC C-terminal domain-like"/>
    <property type="match status" value="1"/>
</dbReference>
<dbReference type="SUPFAM" id="SSF56719">
    <property type="entry name" value="Type II DNA topoisomerase"/>
    <property type="match status" value="1"/>
</dbReference>
<dbReference type="PROSITE" id="PS52040">
    <property type="entry name" value="TOPO_IIA"/>
    <property type="match status" value="1"/>
</dbReference>
<protein>
    <recommendedName>
        <fullName evidence="1">DNA topoisomerase 4 subunit A</fullName>
        <ecNumber evidence="1">5.6.2.2</ecNumber>
    </recommendedName>
    <alternativeName>
        <fullName evidence="1">Topoisomerase IV subunit A</fullName>
    </alternativeName>
</protein>
<sequence>MSDMAERLALHEFTENAYLNYSMYVIMDRALPFIGDGLKPVQRRIVYAMSELGLNASAKFKKSARTVGDVLGKYHPHGDSACYEAMVLMAQPFSYRYPLVDGQGNWGAPDDPKSFAAMRYTESRLSKYSELLLSELGQGTADWVPNFDGTLQEPKMLPARLPNILLNGTTGIAVGMATDIPPHNLREVAQAAIALIDQPKTTLDQLLDIVQGPDYPTEAEIITSRAEIRKIYENGRGSVRMRAVWKKEDGAVVISALPHQVSGARVLEQIAAQMRNKKLPMVDDLRDESDHENPTRLVIVPRSNRVDMDQVMNHLFATTDLEKSYRINLNMIGLDGRPAVKNLLEILSEWLVFRRDTVRRRLNYRLEKVLKRLHILEGLLVAFLNIDEVIEIIRNEDEPKPALMSRFGLTETQAEAILELKLRHLAKLEEMKIRGEQSELEKERDQLQGILASERKMNNLLKKELQADAQAYGDDRRSPLQEREEAKAMSEHDMLPSEPVTIVLSQMGWVRSAKGHDIDAPGLNYKAGDSFKAAVKGKSNQPVVFVDSTGRSYAIDPITLPSARGQGEPLTGKLTLPPGATVDHMLMESDDQKLLMASDAGYGFVCTFNDLVARNRAGKALITLPENAHVMPPVVIEDASDMLLAITQAGRMLMFPVSDLPQLSKGKGNKIINIPSAEAARGEDGLAQLYVLPPQSTLTIHVGKRKIKLRPEELQKVTGERGRRGTLMRGLQRIDRVEIDSPRRASSGDSEE</sequence>
<keyword id="KW-1003">Cell membrane</keyword>
<keyword id="KW-0238">DNA-binding</keyword>
<keyword id="KW-0413">Isomerase</keyword>
<keyword id="KW-0472">Membrane</keyword>
<keyword id="KW-1185">Reference proteome</keyword>
<keyword id="KW-0799">Topoisomerase</keyword>
<gene>
    <name evidence="1" type="primary">parC</name>
    <name type="ordered locus">SF3063</name>
    <name type="ordered locus">S3267</name>
</gene>
<comment type="function">
    <text evidence="1">Topoisomerase IV is essential for chromosome segregation. It relaxes supercoiled DNA. Performs the decatenation events required during the replication of a circular DNA molecule.</text>
</comment>
<comment type="catalytic activity">
    <reaction evidence="1">
        <text>ATP-dependent breakage, passage and rejoining of double-stranded DNA.</text>
        <dbReference type="EC" id="5.6.2.2"/>
    </reaction>
</comment>
<comment type="subunit">
    <text evidence="1">Heterotetramer composed of ParC and ParE.</text>
</comment>
<comment type="subcellular location">
    <subcellularLocation>
        <location evidence="1">Cell membrane</location>
        <topology evidence="1">Peripheral membrane protein</topology>
    </subcellularLocation>
</comment>
<comment type="similarity">
    <text evidence="1">Belongs to the type II topoisomerase GyrA/ParC subunit family. ParC type 1 subfamily.</text>
</comment>